<gene>
    <name evidence="2" type="primary">rpsL</name>
    <name type="ordered locus">LAF_1519</name>
</gene>
<name>RS12_LIMF3</name>
<dbReference type="EMBL" id="AP008937">
    <property type="protein sequence ID" value="BAG27855.1"/>
    <property type="molecule type" value="Genomic_DNA"/>
</dbReference>
<dbReference type="RefSeq" id="WP_003681563.1">
    <property type="nucleotide sequence ID" value="NC_010610.1"/>
</dbReference>
<dbReference type="SMR" id="B2GDX3"/>
<dbReference type="GeneID" id="83716104"/>
<dbReference type="KEGG" id="lfe:LAF_1519"/>
<dbReference type="eggNOG" id="COG0048">
    <property type="taxonomic scope" value="Bacteria"/>
</dbReference>
<dbReference type="HOGENOM" id="CLU_104295_1_1_9"/>
<dbReference type="Proteomes" id="UP000001697">
    <property type="component" value="Chromosome"/>
</dbReference>
<dbReference type="GO" id="GO:0015935">
    <property type="term" value="C:small ribosomal subunit"/>
    <property type="evidence" value="ECO:0007669"/>
    <property type="project" value="InterPro"/>
</dbReference>
<dbReference type="GO" id="GO:0019843">
    <property type="term" value="F:rRNA binding"/>
    <property type="evidence" value="ECO:0007669"/>
    <property type="project" value="UniProtKB-UniRule"/>
</dbReference>
<dbReference type="GO" id="GO:0003735">
    <property type="term" value="F:structural constituent of ribosome"/>
    <property type="evidence" value="ECO:0007669"/>
    <property type="project" value="InterPro"/>
</dbReference>
<dbReference type="GO" id="GO:0000049">
    <property type="term" value="F:tRNA binding"/>
    <property type="evidence" value="ECO:0007669"/>
    <property type="project" value="UniProtKB-UniRule"/>
</dbReference>
<dbReference type="GO" id="GO:0006412">
    <property type="term" value="P:translation"/>
    <property type="evidence" value="ECO:0007669"/>
    <property type="project" value="UniProtKB-UniRule"/>
</dbReference>
<dbReference type="CDD" id="cd03368">
    <property type="entry name" value="Ribosomal_S12"/>
    <property type="match status" value="1"/>
</dbReference>
<dbReference type="FunFam" id="2.40.50.140:FF:000001">
    <property type="entry name" value="30S ribosomal protein S12"/>
    <property type="match status" value="1"/>
</dbReference>
<dbReference type="Gene3D" id="2.40.50.140">
    <property type="entry name" value="Nucleic acid-binding proteins"/>
    <property type="match status" value="1"/>
</dbReference>
<dbReference type="HAMAP" id="MF_00403_B">
    <property type="entry name" value="Ribosomal_uS12_B"/>
    <property type="match status" value="1"/>
</dbReference>
<dbReference type="InterPro" id="IPR012340">
    <property type="entry name" value="NA-bd_OB-fold"/>
</dbReference>
<dbReference type="InterPro" id="IPR006032">
    <property type="entry name" value="Ribosomal_uS12"/>
</dbReference>
<dbReference type="InterPro" id="IPR005679">
    <property type="entry name" value="Ribosomal_uS12_bac"/>
</dbReference>
<dbReference type="NCBIfam" id="TIGR00981">
    <property type="entry name" value="rpsL_bact"/>
    <property type="match status" value="1"/>
</dbReference>
<dbReference type="PANTHER" id="PTHR11652">
    <property type="entry name" value="30S RIBOSOMAL PROTEIN S12 FAMILY MEMBER"/>
    <property type="match status" value="1"/>
</dbReference>
<dbReference type="Pfam" id="PF00164">
    <property type="entry name" value="Ribosom_S12_S23"/>
    <property type="match status" value="1"/>
</dbReference>
<dbReference type="PIRSF" id="PIRSF002133">
    <property type="entry name" value="Ribosomal_S12/S23"/>
    <property type="match status" value="1"/>
</dbReference>
<dbReference type="PRINTS" id="PR01034">
    <property type="entry name" value="RIBOSOMALS12"/>
</dbReference>
<dbReference type="SUPFAM" id="SSF50249">
    <property type="entry name" value="Nucleic acid-binding proteins"/>
    <property type="match status" value="1"/>
</dbReference>
<dbReference type="PROSITE" id="PS00055">
    <property type="entry name" value="RIBOSOMAL_S12"/>
    <property type="match status" value="1"/>
</dbReference>
<accession>B2GDX3</accession>
<comment type="function">
    <text evidence="2">With S4 and S5 plays an important role in translational accuracy.</text>
</comment>
<comment type="function">
    <text evidence="2">Interacts with and stabilizes bases of the 16S rRNA that are involved in tRNA selection in the A site and with the mRNA backbone. Located at the interface of the 30S and 50S subunits, it traverses the body of the 30S subunit contacting proteins on the other side and probably holding the rRNA structure together. The combined cluster of proteins S8, S12 and S17 appears to hold together the shoulder and platform of the 30S subunit.</text>
</comment>
<comment type="subunit">
    <text evidence="2">Part of the 30S ribosomal subunit. Contacts proteins S8 and S17. May interact with IF1 in the 30S initiation complex.</text>
</comment>
<comment type="similarity">
    <text evidence="2">Belongs to the universal ribosomal protein uS12 family.</text>
</comment>
<keyword id="KW-0488">Methylation</keyword>
<keyword id="KW-1185">Reference proteome</keyword>
<keyword id="KW-0687">Ribonucleoprotein</keyword>
<keyword id="KW-0689">Ribosomal protein</keyword>
<keyword id="KW-0694">RNA-binding</keyword>
<keyword id="KW-0699">rRNA-binding</keyword>
<keyword id="KW-0820">tRNA-binding</keyword>
<feature type="chain" id="PRO_1000194183" description="Small ribosomal subunit protein uS12">
    <location>
        <begin position="1"/>
        <end position="137"/>
    </location>
</feature>
<feature type="region of interest" description="Disordered" evidence="3">
    <location>
        <begin position="1"/>
        <end position="22"/>
    </location>
</feature>
<feature type="region of interest" description="Disordered" evidence="3">
    <location>
        <begin position="37"/>
        <end position="57"/>
    </location>
</feature>
<feature type="compositionally biased region" description="Basic residues" evidence="3">
    <location>
        <begin position="9"/>
        <end position="19"/>
    </location>
</feature>
<feature type="modified residue" description="3-methylthioaspartic acid" evidence="1">
    <location>
        <position position="102"/>
    </location>
</feature>
<reference key="1">
    <citation type="journal article" date="2008" name="DNA Res.">
        <title>Comparative genome analysis of Lactobacillus reuteri and Lactobacillus fermentum reveal a genomic island for reuterin and cobalamin production.</title>
        <authorList>
            <person name="Morita H."/>
            <person name="Toh H."/>
            <person name="Fukuda S."/>
            <person name="Horikawa H."/>
            <person name="Oshima K."/>
            <person name="Suzuki T."/>
            <person name="Murakami M."/>
            <person name="Hisamatsu S."/>
            <person name="Kato Y."/>
            <person name="Takizawa T."/>
            <person name="Fukuoka H."/>
            <person name="Yoshimura T."/>
            <person name="Itoh K."/>
            <person name="O'Sullivan D.J."/>
            <person name="McKay L.L."/>
            <person name="Ohno H."/>
            <person name="Kikuchi J."/>
            <person name="Masaoka T."/>
            <person name="Hattori M."/>
        </authorList>
    </citation>
    <scope>NUCLEOTIDE SEQUENCE [LARGE SCALE GENOMIC DNA]</scope>
    <source>
        <strain>NBRC 3956 / LMG 18251</strain>
    </source>
</reference>
<protein>
    <recommendedName>
        <fullName evidence="2">Small ribosomal subunit protein uS12</fullName>
    </recommendedName>
    <alternativeName>
        <fullName evidence="4">30S ribosomal protein S12</fullName>
    </alternativeName>
</protein>
<evidence type="ECO:0000250" key="1"/>
<evidence type="ECO:0000255" key="2">
    <source>
        <dbReference type="HAMAP-Rule" id="MF_00403"/>
    </source>
</evidence>
<evidence type="ECO:0000256" key="3">
    <source>
        <dbReference type="SAM" id="MobiDB-lite"/>
    </source>
</evidence>
<evidence type="ECO:0000305" key="4"/>
<proteinExistence type="inferred from homology"/>
<organism>
    <name type="scientific">Limosilactobacillus fermentum (strain NBRC 3956 / LMG 18251)</name>
    <name type="common">Lactobacillus fermentum</name>
    <dbReference type="NCBI Taxonomy" id="334390"/>
    <lineage>
        <taxon>Bacteria</taxon>
        <taxon>Bacillati</taxon>
        <taxon>Bacillota</taxon>
        <taxon>Bacilli</taxon>
        <taxon>Lactobacillales</taxon>
        <taxon>Lactobacillaceae</taxon>
        <taxon>Limosilactobacillus</taxon>
    </lineage>
</organism>
<sequence>MPTINQLVRKGRKSHKGKSKSPALGFVYNSFKKEEIKNPSPQKRGVATRVGTMTPKKPNSALRKYARVRLSNLIEVTAYIPGIGHNLQEHSVVLIRGGRVKDLPGVRYHIIRGTLDTAGVDGRMQSRSKYGAKKPKK</sequence>